<evidence type="ECO:0000255" key="1">
    <source>
        <dbReference type="HAMAP-Rule" id="MF_00392"/>
    </source>
</evidence>
<comment type="function">
    <text evidence="1">Condensation of UDP-2,3-diacylglucosamine and 2,3-diacylglucosamine-1-phosphate to form lipid A disaccharide, a precursor of lipid A, a phosphorylated glycolipid that anchors the lipopolysaccharide to the outer membrane of the cell.</text>
</comment>
<comment type="catalytic activity">
    <reaction evidence="1">
        <text>a lipid X + a UDP-2-N,3-O-bis[(3R)-3-hydroxyacyl]-alpha-D-glucosamine = a lipid A disaccharide + UDP + H(+)</text>
        <dbReference type="Rhea" id="RHEA:67828"/>
        <dbReference type="ChEBI" id="CHEBI:15378"/>
        <dbReference type="ChEBI" id="CHEBI:58223"/>
        <dbReference type="ChEBI" id="CHEBI:137748"/>
        <dbReference type="ChEBI" id="CHEBI:176338"/>
        <dbReference type="ChEBI" id="CHEBI:176343"/>
        <dbReference type="EC" id="2.4.1.182"/>
    </reaction>
</comment>
<comment type="pathway">
    <text evidence="1">Bacterial outer membrane biogenesis; LPS lipid A biosynthesis.</text>
</comment>
<comment type="similarity">
    <text evidence="1">Belongs to the LpxB family.</text>
</comment>
<dbReference type="EC" id="2.4.1.182" evidence="1"/>
<dbReference type="EMBL" id="CP000284">
    <property type="protein sequence ID" value="ABE49785.1"/>
    <property type="molecule type" value="Genomic_DNA"/>
</dbReference>
<dbReference type="RefSeq" id="WP_011479739.1">
    <property type="nucleotide sequence ID" value="NC_007947.1"/>
</dbReference>
<dbReference type="SMR" id="Q1H152"/>
<dbReference type="STRING" id="265072.Mfla_1517"/>
<dbReference type="CAZy" id="GT19">
    <property type="family name" value="Glycosyltransferase Family 19"/>
</dbReference>
<dbReference type="KEGG" id="mfa:Mfla_1517"/>
<dbReference type="eggNOG" id="COG0763">
    <property type="taxonomic scope" value="Bacteria"/>
</dbReference>
<dbReference type="HOGENOM" id="CLU_036577_3_0_4"/>
<dbReference type="OrthoDB" id="9801642at2"/>
<dbReference type="UniPathway" id="UPA00973"/>
<dbReference type="Proteomes" id="UP000002440">
    <property type="component" value="Chromosome"/>
</dbReference>
<dbReference type="GO" id="GO:0016020">
    <property type="term" value="C:membrane"/>
    <property type="evidence" value="ECO:0007669"/>
    <property type="project" value="GOC"/>
</dbReference>
<dbReference type="GO" id="GO:0008915">
    <property type="term" value="F:lipid-A-disaccharide synthase activity"/>
    <property type="evidence" value="ECO:0007669"/>
    <property type="project" value="UniProtKB-UniRule"/>
</dbReference>
<dbReference type="GO" id="GO:0005543">
    <property type="term" value="F:phospholipid binding"/>
    <property type="evidence" value="ECO:0007669"/>
    <property type="project" value="TreeGrafter"/>
</dbReference>
<dbReference type="GO" id="GO:0009245">
    <property type="term" value="P:lipid A biosynthetic process"/>
    <property type="evidence" value="ECO:0007669"/>
    <property type="project" value="UniProtKB-UniRule"/>
</dbReference>
<dbReference type="HAMAP" id="MF_00392">
    <property type="entry name" value="LpxB"/>
    <property type="match status" value="1"/>
</dbReference>
<dbReference type="InterPro" id="IPR003835">
    <property type="entry name" value="Glyco_trans_19"/>
</dbReference>
<dbReference type="NCBIfam" id="TIGR00215">
    <property type="entry name" value="lpxB"/>
    <property type="match status" value="1"/>
</dbReference>
<dbReference type="PANTHER" id="PTHR30372">
    <property type="entry name" value="LIPID-A-DISACCHARIDE SYNTHASE"/>
    <property type="match status" value="1"/>
</dbReference>
<dbReference type="PANTHER" id="PTHR30372:SF4">
    <property type="entry name" value="LIPID-A-DISACCHARIDE SYNTHASE, MITOCHONDRIAL-RELATED"/>
    <property type="match status" value="1"/>
</dbReference>
<dbReference type="Pfam" id="PF02684">
    <property type="entry name" value="LpxB"/>
    <property type="match status" value="1"/>
</dbReference>
<dbReference type="SUPFAM" id="SSF53756">
    <property type="entry name" value="UDP-Glycosyltransferase/glycogen phosphorylase"/>
    <property type="match status" value="1"/>
</dbReference>
<proteinExistence type="inferred from homology"/>
<protein>
    <recommendedName>
        <fullName evidence="1">Lipid-A-disaccharide synthase</fullName>
        <ecNumber evidence="1">2.4.1.182</ecNumber>
    </recommendedName>
</protein>
<organism>
    <name type="scientific">Methylobacillus flagellatus (strain ATCC 51484 / DSM 6875 / VKM B-1610 / KT)</name>
    <dbReference type="NCBI Taxonomy" id="265072"/>
    <lineage>
        <taxon>Bacteria</taxon>
        <taxon>Pseudomonadati</taxon>
        <taxon>Pseudomonadota</taxon>
        <taxon>Betaproteobacteria</taxon>
        <taxon>Nitrosomonadales</taxon>
        <taxon>Methylophilaceae</taxon>
        <taxon>Methylobacillus</taxon>
    </lineage>
</organism>
<gene>
    <name evidence="1" type="primary">lpxB</name>
    <name type="ordered locus">Mfla_1517</name>
</gene>
<accession>Q1H152</accession>
<keyword id="KW-0328">Glycosyltransferase</keyword>
<keyword id="KW-0441">Lipid A biosynthesis</keyword>
<keyword id="KW-0444">Lipid biosynthesis</keyword>
<keyword id="KW-0443">Lipid metabolism</keyword>
<keyword id="KW-1185">Reference proteome</keyword>
<keyword id="KW-0808">Transferase</keyword>
<reference key="1">
    <citation type="submission" date="2006-03" db="EMBL/GenBank/DDBJ databases">
        <title>Complete sequence of Methylobacillus flagellatus KT.</title>
        <authorList>
            <consortium name="US DOE Joint Genome Institute"/>
            <person name="Copeland A."/>
            <person name="Lucas S."/>
            <person name="Lapidus A."/>
            <person name="Barry K."/>
            <person name="Detter J.C."/>
            <person name="Glavina del Rio T."/>
            <person name="Hammon N."/>
            <person name="Israni S."/>
            <person name="Dalin E."/>
            <person name="Tice H."/>
            <person name="Pitluck S."/>
            <person name="Brettin T."/>
            <person name="Bruce D."/>
            <person name="Han C."/>
            <person name="Tapia R."/>
            <person name="Saunders E."/>
            <person name="Gilna P."/>
            <person name="Schmutz J."/>
            <person name="Larimer F."/>
            <person name="Land M."/>
            <person name="Kyrpides N."/>
            <person name="Anderson I."/>
            <person name="Richardson P."/>
        </authorList>
    </citation>
    <scope>NUCLEOTIDE SEQUENCE [LARGE SCALE GENOMIC DNA]</scope>
    <source>
        <strain>ATCC 51484 / DSM 6875 / VKM B-1610 / KT</strain>
    </source>
</reference>
<sequence>MPTIGIVAGEASGDLLGSHLIRALKKQRPDLKFVGIAGPKMIAEGAETLFPMERLSVRGYVEVLRHLPGLLKIRKEVAQYFLDHRPDVFIGIDAPDFNFTLERKLKHQGIPTVHYVSPSIWAWRRGKIKKIQQAVSHMLALFPFEPEIYRQAGVAVSYVGHPLADMLPMEPDMEGAREELKLPQDSLVVAMLPGSRQSEVQQLADLYIKTAKLILSERPDARFLVPLITRETRAIFERALYANEGYDLPVSIMFGHAHQAMEAANAVIVASGTATLEAALIKRPMIITYRMPNLSWQILKRMKYLPYVGLPNVLAGRFIVPELLQHDAVPDKLAATLLQMLSDKSQIADIQTEFRRMHELLRQNTEEKAARAVLSFIK</sequence>
<name>LPXB_METFK</name>
<feature type="chain" id="PRO_0000255198" description="Lipid-A-disaccharide synthase">
    <location>
        <begin position="1"/>
        <end position="378"/>
    </location>
</feature>